<comment type="function">
    <text evidence="3">Has the capacity to hydroxylate certain steroids in the 15-beta position. Also hydroxylates progesterone in the 11-alpha and 9-beta position.</text>
</comment>
<comment type="catalytic activity">
    <reaction evidence="2 3">
        <text>reduced 2[4Fe-4S]-[ferredoxin] + progesterone + O2 + 2 H(+) = 15beta-hydroxyprogesterone + oxidized 2[4Fe-4S]-[ferredoxin] + H2O</text>
        <dbReference type="Rhea" id="RHEA:27337"/>
        <dbReference type="Rhea" id="RHEA-COMP:10002"/>
        <dbReference type="Rhea" id="RHEA-COMP:10004"/>
        <dbReference type="ChEBI" id="CHEBI:15377"/>
        <dbReference type="ChEBI" id="CHEBI:15378"/>
        <dbReference type="ChEBI" id="CHEBI:15379"/>
        <dbReference type="ChEBI" id="CHEBI:17026"/>
        <dbReference type="ChEBI" id="CHEBI:33722"/>
        <dbReference type="ChEBI" id="CHEBI:33723"/>
        <dbReference type="ChEBI" id="CHEBI:59418"/>
        <dbReference type="EC" id="1.14.15.8"/>
    </reaction>
</comment>
<comment type="cofactor">
    <cofactor evidence="1">
        <name>heme</name>
        <dbReference type="ChEBI" id="CHEBI:30413"/>
    </cofactor>
</comment>
<comment type="biophysicochemical properties">
    <kinetics>
        <KM evidence="2 3">251.4 uM for progesterone for the 15-beta hydroxylation</KM>
        <KM evidence="2 3">77.5 uM for progesterone for the 6-beta hydroxylation</KM>
        <KM evidence="2 3">140.3 uM for progesterone for the 11-alpha hydroxylation</KM>
        <KM evidence="2 3">155.5 uM for progesterone for the 9-alpha hydroxylation</KM>
        <KM evidence="2 3">1.5 uM for deoxycorticosterone</KM>
        <Vmax evidence="2 3">337.0 nmol/min/mg enzyme for the 15-beta hydroxylation toward progesterone</Vmax>
        <Vmax evidence="2 3">22.3 nmol/min/mg enzyme for the 6-beta hydroxylation toward progesterone</Vmax>
        <Vmax evidence="2 3">17.5 nmol/min/mg enzyme for the 11-alpha hydroxylation toward progesterone</Vmax>
        <Vmax evidence="2 3">6.5 nmol/min/mg enzyme for the 6-alpha hydroxylation toward progesterone</Vmax>
        <Vmax evidence="2 3">246.0 nmol/min/mg enzyme toward deoxycorticosterone</Vmax>
        <text>With deoxycorticosterone as substrate only 15-beta hydroxylation is observed.</text>
    </kinetics>
</comment>
<comment type="subcellular location">
    <subcellularLocation>
        <location evidence="1">Cytoplasm</location>
    </subcellularLocation>
</comment>
<comment type="similarity">
    <text evidence="4">Belongs to the cytochrome P450 family.</text>
</comment>
<organism>
    <name type="scientific">Priestia megaterium</name>
    <name type="common">Bacillus megaterium</name>
    <dbReference type="NCBI Taxonomy" id="1404"/>
    <lineage>
        <taxon>Bacteria</taxon>
        <taxon>Bacillati</taxon>
        <taxon>Bacillota</taxon>
        <taxon>Bacilli</taxon>
        <taxon>Bacillales</taxon>
        <taxon>Bacillaceae</taxon>
        <taxon>Priestia</taxon>
    </lineage>
</organism>
<name>CPXM_PRIMG</name>
<keyword id="KW-0002">3D-structure</keyword>
<keyword id="KW-0963">Cytoplasm</keyword>
<keyword id="KW-0349">Heme</keyword>
<keyword id="KW-0408">Iron</keyword>
<keyword id="KW-0479">Metal-binding</keyword>
<keyword id="KW-0503">Monooxygenase</keyword>
<keyword id="KW-0560">Oxidoreductase</keyword>
<protein>
    <recommendedName>
        <fullName>Cytochrome P450(MEG)</fullName>
        <ecNumber>1.14.99.-</ecNumber>
    </recommendedName>
    <alternativeName>
        <fullName>Steroid 15-beta-hydroxylase</fullName>
        <ecNumber>1.14.15.8</ecNumber>
    </alternativeName>
    <alternativeName>
        <fullName>Steroid 15-beta-monooxygenase</fullName>
    </alternativeName>
</protein>
<sequence>MKEVIAVKEITRFKTRTEEFSPYAWCKRMLENDPVSYHEGTDTWNVFKYEDVKRVLSDYKHFSSVRKRTTISVGTDSEEGSVPEKIQITESDPPDHRKRRSLLAAAFTPRSLQNWEPRIQEIADELIGQMDGGTEIDIVASLASPLPIIVMADLMGVPSKDRLLFKKWVDTLFLPFDREKQEEVDKLKQVAAKEYYQYLYPIVVQKRLNPADDIISDLLKSEVDGEMFTDDEVVRTTMLILGAGVETTSHLLANSFYSLLYDDKEVYQELHENLDLVPQAVEEMLRFRFNLIKLDRTVKEDNDLLGVELKEGDSVVVWMSAANMDEEMFEDPFTLNIHRPNNKKHLTFGNGPHFCLGAPLARLEAKIALTAFLKKFKHIEAVPSFQLEENLTDSATGQTLTSLPLKASRM</sequence>
<gene>
    <name type="primary">cyp106A2</name>
</gene>
<reference key="1">
    <citation type="journal article" date="1993" name="Mol. Gen. Genet.">
        <title>Cloning sequencing and expression of the gene for cytochrome P450meg, the steroid-15 beta-monooxygenase from Bacillus megaterium ATCC 13368.</title>
        <authorList>
            <person name="Rauschenbach R."/>
            <person name="Isernhagen M."/>
            <person name="Noeske-Jungblut C."/>
            <person name="Boidol W."/>
            <person name="Siewert G."/>
        </authorList>
    </citation>
    <scope>NUCLEOTIDE SEQUENCE [GENOMIC DNA]</scope>
    <source>
        <strain>ATCC 13368 / 41</strain>
    </source>
</reference>
<reference key="2">
    <citation type="journal article" date="1979" name="J. Biol. Chem.">
        <title>Purification and characterization of cytochrome P-450meg.</title>
        <authorList>
            <person name="Berg A."/>
            <person name="Ingelman-Sundberg M."/>
            <person name="Gustafsson M."/>
        </authorList>
    </citation>
    <scope>CHARACTERIZATION</scope>
    <source>
        <strain>ATCC 13368 / 41</strain>
    </source>
</reference>
<reference key="3">
    <citation type="journal article" date="1981" name="Biochem. J.">
        <title>Studies on the substrate specificity and inducibility of cytochrome P-450meg.</title>
        <authorList>
            <person name="Berg A."/>
            <person name="Rafter J.J."/>
        </authorList>
    </citation>
    <scope>CHARACTERIZATION</scope>
    <source>
        <strain>ATCC 13368 / 41</strain>
    </source>
</reference>
<reference key="4">
    <citation type="journal article" date="2004" name="Biochem. Biophys. Res. Commun.">
        <title>Identification of monohydroxy progesterones produced by CYP106A2 using comparative HPLC and electrospray ionisation collision-induced dissociation mass spectrometry.</title>
        <authorList>
            <person name="Lisurek M."/>
            <person name="Kang M.J."/>
            <person name="Hartmann R.W."/>
            <person name="Bernhardt R."/>
        </authorList>
    </citation>
    <scope>CATALYTIC ACTIVITY</scope>
    <scope>BIOPHYSICOCHEMICAL PROPERTIES</scope>
</reference>
<reference key="5">
    <citation type="journal article" date="2008" name="ChemBioChem">
        <title>Theoretical and experimental evaluation of a CYP106A2 low homology model and production of mutants with changed activity and selectivity of hydroxylation.</title>
        <authorList>
            <person name="Lisurek M."/>
            <person name="Simgen B."/>
            <person name="Antes I."/>
            <person name="Bernhardt R."/>
        </authorList>
    </citation>
    <scope>FUNCTION</scope>
    <scope>CATALYTIC ACTIVITY</scope>
    <scope>BIOPHYSICOCHEMICAL PROPERTIES</scope>
    <scope>MUTAGENESIS OF SER-394; ALA-395; THR-396; GLY-397 AND GLN-398</scope>
</reference>
<feature type="chain" id="PRO_0000052219" description="Cytochrome P450(MEG)">
    <location>
        <begin position="1"/>
        <end position="410"/>
    </location>
</feature>
<feature type="binding site" description="axial binding residue" evidence="1">
    <location>
        <position position="355"/>
    </location>
    <ligand>
        <name>heme</name>
        <dbReference type="ChEBI" id="CHEBI:30413"/>
    </ligand>
    <ligandPart>
        <name>Fe</name>
        <dbReference type="ChEBI" id="CHEBI:18248"/>
    </ligandPart>
</feature>
<feature type="mutagenesis site" description="30% of 15-beta hydroxylation activity (for progesterone)." evidence="3">
    <original>S</original>
    <variation>I</variation>
    <location>
        <position position="394"/>
    </location>
</feature>
<feature type="mutagenesis site" description="40% of 15-beta hydroxylation activity (for progesterone)." evidence="3">
    <original>A</original>
    <variation>L</variation>
    <location>
        <position position="395"/>
    </location>
</feature>
<feature type="mutagenesis site" description="Loss of 15-beta hydroxylation activity (for progesterone and deoxycorticosterone)." evidence="3">
    <original>T</original>
    <variation>R</variation>
    <location>
        <position position="396"/>
    </location>
</feature>
<feature type="mutagenesis site" description="Loss of 15-beta hydroxylation activity (for progesterone)." evidence="3">
    <original>G</original>
    <variation>P</variation>
    <location>
        <position position="397"/>
    </location>
</feature>
<feature type="mutagenesis site" description="30% of 15-beta hydroxylation activity (for progesterone)." evidence="3">
    <original>Q</original>
    <variation>S</variation>
    <location>
        <position position="398"/>
    </location>
</feature>
<feature type="helix" evidence="5">
    <location>
        <begin position="7"/>
        <end position="11"/>
    </location>
</feature>
<feature type="helix" evidence="5">
    <location>
        <begin position="16"/>
        <end position="20"/>
    </location>
</feature>
<feature type="helix" evidence="5">
    <location>
        <begin position="23"/>
        <end position="32"/>
    </location>
</feature>
<feature type="strand" evidence="5">
    <location>
        <begin position="34"/>
        <end position="38"/>
    </location>
</feature>
<feature type="turn" evidence="5">
    <location>
        <begin position="39"/>
        <end position="42"/>
    </location>
</feature>
<feature type="strand" evidence="5">
    <location>
        <begin position="43"/>
        <end position="46"/>
    </location>
</feature>
<feature type="helix" evidence="5">
    <location>
        <begin position="49"/>
        <end position="57"/>
    </location>
</feature>
<feature type="turn" evidence="5">
    <location>
        <begin position="59"/>
        <end position="61"/>
    </location>
</feature>
<feature type="strand" evidence="5">
    <location>
        <begin position="62"/>
        <end position="65"/>
    </location>
</feature>
<feature type="turn" evidence="6">
    <location>
        <begin position="78"/>
        <end position="80"/>
    </location>
</feature>
<feature type="helix" evidence="5">
    <location>
        <begin position="84"/>
        <end position="86"/>
    </location>
</feature>
<feature type="helix" evidence="7">
    <location>
        <begin position="88"/>
        <end position="90"/>
    </location>
</feature>
<feature type="helix" evidence="5">
    <location>
        <begin position="95"/>
        <end position="104"/>
    </location>
</feature>
<feature type="helix" evidence="5">
    <location>
        <begin position="109"/>
        <end position="128"/>
    </location>
</feature>
<feature type="strand" evidence="6">
    <location>
        <begin position="132"/>
        <end position="134"/>
    </location>
</feature>
<feature type="strand" evidence="5">
    <location>
        <begin position="135"/>
        <end position="137"/>
    </location>
</feature>
<feature type="helix" evidence="5">
    <location>
        <begin position="138"/>
        <end position="141"/>
    </location>
</feature>
<feature type="turn" evidence="5">
    <location>
        <begin position="142"/>
        <end position="144"/>
    </location>
</feature>
<feature type="helix" evidence="5">
    <location>
        <begin position="145"/>
        <end position="155"/>
    </location>
</feature>
<feature type="helix" evidence="5">
    <location>
        <begin position="159"/>
        <end position="161"/>
    </location>
</feature>
<feature type="helix" evidence="5">
    <location>
        <begin position="162"/>
        <end position="173"/>
    </location>
</feature>
<feature type="helix" evidence="5">
    <location>
        <begin position="184"/>
        <end position="208"/>
    </location>
</feature>
<feature type="helix" evidence="5">
    <location>
        <begin position="214"/>
        <end position="220"/>
    </location>
</feature>
<feature type="helix" evidence="5">
    <location>
        <begin position="230"/>
        <end position="261"/>
    </location>
</feature>
<feature type="helix" evidence="5">
    <location>
        <begin position="266"/>
        <end position="272"/>
    </location>
</feature>
<feature type="helix" evidence="5">
    <location>
        <begin position="274"/>
        <end position="276"/>
    </location>
</feature>
<feature type="helix" evidence="5">
    <location>
        <begin position="277"/>
        <end position="287"/>
    </location>
</feature>
<feature type="strand" evidence="5">
    <location>
        <begin position="293"/>
        <end position="298"/>
    </location>
</feature>
<feature type="strand" evidence="5">
    <location>
        <begin position="306"/>
        <end position="309"/>
    </location>
</feature>
<feature type="strand" evidence="5">
    <location>
        <begin position="314"/>
        <end position="318"/>
    </location>
</feature>
<feature type="helix" evidence="5">
    <location>
        <begin position="319"/>
        <end position="322"/>
    </location>
</feature>
<feature type="turn" evidence="5">
    <location>
        <begin position="326"/>
        <end position="328"/>
    </location>
</feature>
<feature type="strand" evidence="5">
    <location>
        <begin position="329"/>
        <end position="331"/>
    </location>
</feature>
<feature type="helix" evidence="5">
    <location>
        <begin position="342"/>
        <end position="344"/>
    </location>
</feature>
<feature type="helix" evidence="5">
    <location>
        <begin position="351"/>
        <end position="353"/>
    </location>
</feature>
<feature type="helix" evidence="5">
    <location>
        <begin position="358"/>
        <end position="375"/>
    </location>
</feature>
<feature type="strand" evidence="5">
    <location>
        <begin position="377"/>
        <end position="381"/>
    </location>
</feature>
<feature type="helix" evidence="5">
    <location>
        <begin position="387"/>
        <end position="390"/>
    </location>
</feature>
<feature type="strand" evidence="7">
    <location>
        <begin position="391"/>
        <end position="394"/>
    </location>
</feature>
<feature type="strand" evidence="5">
    <location>
        <begin position="399"/>
        <end position="401"/>
    </location>
</feature>
<feature type="strand" evidence="5">
    <location>
        <begin position="404"/>
        <end position="408"/>
    </location>
</feature>
<proteinExistence type="evidence at protein level"/>
<evidence type="ECO:0000250" key="1"/>
<evidence type="ECO:0000269" key="2">
    <source>
    </source>
</evidence>
<evidence type="ECO:0000269" key="3">
    <source>
    </source>
</evidence>
<evidence type="ECO:0000305" key="4"/>
<evidence type="ECO:0007829" key="5">
    <source>
        <dbReference type="PDB" id="4YT3"/>
    </source>
</evidence>
<evidence type="ECO:0007829" key="6">
    <source>
        <dbReference type="PDB" id="5IKI"/>
    </source>
</evidence>
<evidence type="ECO:0007829" key="7">
    <source>
        <dbReference type="PDB" id="5XNT"/>
    </source>
</evidence>
<dbReference type="EC" id="1.14.99.-"/>
<dbReference type="EC" id="1.14.15.8"/>
<dbReference type="EMBL" id="Z21972">
    <property type="protein sequence ID" value="CAA79985.1"/>
    <property type="molecule type" value="Genomic_DNA"/>
</dbReference>
<dbReference type="PIR" id="S39924">
    <property type="entry name" value="S39924"/>
</dbReference>
<dbReference type="PDB" id="4YT3">
    <property type="method" value="X-ray"/>
    <property type="resolution" value="1.80 A"/>
    <property type="chains" value="A/B=1-410"/>
</dbReference>
<dbReference type="PDB" id="5IKI">
    <property type="method" value="X-ray"/>
    <property type="resolution" value="2.40 A"/>
    <property type="chains" value="A/B=1-410"/>
</dbReference>
<dbReference type="PDB" id="5XNT">
    <property type="method" value="X-ray"/>
    <property type="resolution" value="2.70 A"/>
    <property type="chains" value="A=1-409"/>
</dbReference>
<dbReference type="PDBsum" id="4YT3"/>
<dbReference type="PDBsum" id="5IKI"/>
<dbReference type="PDBsum" id="5XNT"/>
<dbReference type="SMR" id="Q06069"/>
<dbReference type="KEGG" id="ag:CAA79985"/>
<dbReference type="BioCyc" id="MetaCyc:MONOMER-15437"/>
<dbReference type="BRENDA" id="1.14.15.8">
    <property type="organism ID" value="656"/>
</dbReference>
<dbReference type="BRENDA" id="1.14.99.14">
    <property type="organism ID" value="656"/>
</dbReference>
<dbReference type="EvolutionaryTrace" id="Q06069"/>
<dbReference type="GO" id="GO:0005737">
    <property type="term" value="C:cytoplasm"/>
    <property type="evidence" value="ECO:0007669"/>
    <property type="project" value="UniProtKB-SubCell"/>
</dbReference>
<dbReference type="GO" id="GO:0020037">
    <property type="term" value="F:heme binding"/>
    <property type="evidence" value="ECO:0007669"/>
    <property type="project" value="InterPro"/>
</dbReference>
<dbReference type="GO" id="GO:0005506">
    <property type="term" value="F:iron ion binding"/>
    <property type="evidence" value="ECO:0007669"/>
    <property type="project" value="InterPro"/>
</dbReference>
<dbReference type="GO" id="GO:0004497">
    <property type="term" value="F:monooxygenase activity"/>
    <property type="evidence" value="ECO:0007669"/>
    <property type="project" value="UniProtKB-KW"/>
</dbReference>
<dbReference type="GO" id="GO:0016705">
    <property type="term" value="F:oxidoreductase activity, acting on paired donors, with incorporation or reduction of molecular oxygen"/>
    <property type="evidence" value="ECO:0007669"/>
    <property type="project" value="InterPro"/>
</dbReference>
<dbReference type="CDD" id="cd11032">
    <property type="entry name" value="P450_EryK-like"/>
    <property type="match status" value="1"/>
</dbReference>
<dbReference type="FunFam" id="1.10.630.10:FF:000018">
    <property type="entry name" value="Cytochrome P450 monooxygenase"/>
    <property type="match status" value="1"/>
</dbReference>
<dbReference type="Gene3D" id="1.10.630.10">
    <property type="entry name" value="Cytochrome P450"/>
    <property type="match status" value="1"/>
</dbReference>
<dbReference type="InterPro" id="IPR001128">
    <property type="entry name" value="Cyt_P450"/>
</dbReference>
<dbReference type="InterPro" id="IPR002397">
    <property type="entry name" value="Cyt_P450_B"/>
</dbReference>
<dbReference type="InterPro" id="IPR017972">
    <property type="entry name" value="Cyt_P450_CS"/>
</dbReference>
<dbReference type="InterPro" id="IPR036396">
    <property type="entry name" value="Cyt_P450_sf"/>
</dbReference>
<dbReference type="PANTHER" id="PTHR46696:SF1">
    <property type="entry name" value="CYTOCHROME P450 YJIB-RELATED"/>
    <property type="match status" value="1"/>
</dbReference>
<dbReference type="PANTHER" id="PTHR46696">
    <property type="entry name" value="P450, PUTATIVE (EUROFUNG)-RELATED"/>
    <property type="match status" value="1"/>
</dbReference>
<dbReference type="Pfam" id="PF00067">
    <property type="entry name" value="p450"/>
    <property type="match status" value="1"/>
</dbReference>
<dbReference type="PRINTS" id="PR00359">
    <property type="entry name" value="BP450"/>
</dbReference>
<dbReference type="PRINTS" id="PR00385">
    <property type="entry name" value="P450"/>
</dbReference>
<dbReference type="SUPFAM" id="SSF48264">
    <property type="entry name" value="Cytochrome P450"/>
    <property type="match status" value="1"/>
</dbReference>
<dbReference type="PROSITE" id="PS00086">
    <property type="entry name" value="CYTOCHROME_P450"/>
    <property type="match status" value="1"/>
</dbReference>
<accession>Q06069</accession>